<keyword id="KW-1003">Cell membrane</keyword>
<keyword id="KW-0472">Membrane</keyword>
<keyword id="KW-1185">Reference proteome</keyword>
<keyword id="KW-0812">Transmembrane</keyword>
<keyword id="KW-1133">Transmembrane helix</keyword>
<dbReference type="EMBL" id="AM295250">
    <property type="protein sequence ID" value="CAL28325.1"/>
    <property type="molecule type" value="Genomic_DNA"/>
</dbReference>
<dbReference type="RefSeq" id="WP_015900665.1">
    <property type="nucleotide sequence ID" value="NC_012121.1"/>
</dbReference>
<dbReference type="SMR" id="B9DMY6"/>
<dbReference type="GeneID" id="93793845"/>
<dbReference type="KEGG" id="sca:SCA_1420"/>
<dbReference type="eggNOG" id="COG4399">
    <property type="taxonomic scope" value="Bacteria"/>
</dbReference>
<dbReference type="HOGENOM" id="CLU_042384_0_0_9"/>
<dbReference type="OrthoDB" id="9787430at2"/>
<dbReference type="BioCyc" id="SCAR396513:SCA_RS07095-MONOMER"/>
<dbReference type="Proteomes" id="UP000000444">
    <property type="component" value="Chromosome"/>
</dbReference>
<dbReference type="GO" id="GO:0005886">
    <property type="term" value="C:plasma membrane"/>
    <property type="evidence" value="ECO:0007669"/>
    <property type="project" value="UniProtKB-SubCell"/>
</dbReference>
<dbReference type="InterPro" id="IPR007383">
    <property type="entry name" value="DUF445"/>
</dbReference>
<dbReference type="InterPro" id="IPR016991">
    <property type="entry name" value="UCP032178"/>
</dbReference>
<dbReference type="PANTHER" id="PTHR35791">
    <property type="entry name" value="UPF0754 MEMBRANE PROTEIN YHEB"/>
    <property type="match status" value="1"/>
</dbReference>
<dbReference type="PANTHER" id="PTHR35791:SF1">
    <property type="entry name" value="UPF0754 MEMBRANE PROTEIN YHEB"/>
    <property type="match status" value="1"/>
</dbReference>
<dbReference type="Pfam" id="PF04286">
    <property type="entry name" value="DUF445"/>
    <property type="match status" value="1"/>
</dbReference>
<dbReference type="PIRSF" id="PIRSF032178">
    <property type="entry name" value="UCP032178"/>
    <property type="match status" value="1"/>
</dbReference>
<reference key="1">
    <citation type="journal article" date="2009" name="Appl. Environ. Microbiol.">
        <title>Genome analysis of the meat starter culture bacterium Staphylococcus carnosus TM300.</title>
        <authorList>
            <person name="Rosenstein R."/>
            <person name="Nerz C."/>
            <person name="Biswas L."/>
            <person name="Resch A."/>
            <person name="Raddatz G."/>
            <person name="Schuster S.C."/>
            <person name="Goetz F."/>
        </authorList>
    </citation>
    <scope>NUCLEOTIDE SEQUENCE [LARGE SCALE GENOMIC DNA]</scope>
    <source>
        <strain>TM300</strain>
    </source>
</reference>
<name>Y1420_STACT</name>
<gene>
    <name type="ordered locus">Sca_1420</name>
</gene>
<sequence>MHAFLVILFMIVIGALIGGITNIIAIKMLFHPQRAYHIGKWRIPFTPGLVPKRREEIAYKIGNVIEEHLITESLIKEKISSLSAREAIESFITQQIQKLKKDNATLQNFAGYFGIDLAKTAEDKLSNLIDEKLAQYYQDHNQEPLKSLIPSELEVELDEKIEALTPLLCDRARIYLSSAKGEQDIYNMLDTFFAEKGKIIGLLQMFMTKENIAERIQMELIRLTNHPKAREIVAQLINNEYMTLKNKSLGGVVSPEQFNNIKEKFTPLILSYADISARVNQPIKDLAPSIVKYAEQHAATWTTNLIVEKAAEHLSSIMKQVNLSGIVEEQINSFDLDYIERLIIEIANKELKLIMLLGFLLGGIIGCLQGIIALFV</sequence>
<feature type="chain" id="PRO_0000388318" description="UPF0754 membrane protein Sca_1420">
    <location>
        <begin position="1"/>
        <end position="376"/>
    </location>
</feature>
<feature type="transmembrane region" description="Helical" evidence="2">
    <location>
        <begin position="4"/>
        <end position="24"/>
    </location>
</feature>
<feature type="transmembrane region" description="Helical" evidence="2">
    <location>
        <begin position="356"/>
        <end position="376"/>
    </location>
</feature>
<proteinExistence type="inferred from homology"/>
<protein>
    <recommendedName>
        <fullName>UPF0754 membrane protein Sca_1420</fullName>
    </recommendedName>
</protein>
<accession>B9DMY6</accession>
<organism>
    <name type="scientific">Staphylococcus carnosus (strain TM300)</name>
    <dbReference type="NCBI Taxonomy" id="396513"/>
    <lineage>
        <taxon>Bacteria</taxon>
        <taxon>Bacillati</taxon>
        <taxon>Bacillota</taxon>
        <taxon>Bacilli</taxon>
        <taxon>Bacillales</taxon>
        <taxon>Staphylococcaceae</taxon>
        <taxon>Staphylococcus</taxon>
    </lineage>
</organism>
<comment type="subcellular location">
    <subcellularLocation>
        <location evidence="1">Cell membrane</location>
        <topology evidence="1">Multi-pass membrane protein</topology>
    </subcellularLocation>
</comment>
<comment type="similarity">
    <text evidence="3">Belongs to the UPF0754 family.</text>
</comment>
<evidence type="ECO:0000250" key="1"/>
<evidence type="ECO:0000255" key="2"/>
<evidence type="ECO:0000305" key="3"/>